<accession>Q975X4</accession>
<accession>F9VMT2</accession>
<feature type="chain" id="PRO_0000149245" description="UPF0215 protein STK_03040">
    <location>
        <begin position="1"/>
        <end position="178"/>
    </location>
</feature>
<organism>
    <name type="scientific">Sulfurisphaera tokodaii (strain DSM 16993 / JCM 10545 / NBRC 100140 / 7)</name>
    <name type="common">Sulfolobus tokodaii</name>
    <dbReference type="NCBI Taxonomy" id="273063"/>
    <lineage>
        <taxon>Archaea</taxon>
        <taxon>Thermoproteota</taxon>
        <taxon>Thermoprotei</taxon>
        <taxon>Sulfolobales</taxon>
        <taxon>Sulfolobaceae</taxon>
        <taxon>Sulfurisphaera</taxon>
    </lineage>
</organism>
<gene>
    <name type="ordered locus">STK_03040</name>
</gene>
<sequence>MLVSGIDDGYFPLKYKGRNGRTVMLSVVFKDYDIIDIDFDFIIVDGDDGTSVLNSLQTGDVCILDGLTFGGFNFVNPSELKSKYIIFYSSKPNIFKITRALDRHFNDERRDIIINVISNLTRVSTLRGDVYIYTNLDLKMAKNIIEEYQVFDRIPLPLKIAHEISSSLSTFLLSKKII</sequence>
<proteinExistence type="inferred from homology"/>
<reference key="1">
    <citation type="journal article" date="2001" name="DNA Res.">
        <title>Complete genome sequence of an aerobic thermoacidophilic Crenarchaeon, Sulfolobus tokodaii strain7.</title>
        <authorList>
            <person name="Kawarabayasi Y."/>
            <person name="Hino Y."/>
            <person name="Horikawa H."/>
            <person name="Jin-no K."/>
            <person name="Takahashi M."/>
            <person name="Sekine M."/>
            <person name="Baba S."/>
            <person name="Ankai A."/>
            <person name="Kosugi H."/>
            <person name="Hosoyama A."/>
            <person name="Fukui S."/>
            <person name="Nagai Y."/>
            <person name="Nishijima K."/>
            <person name="Otsuka R."/>
            <person name="Nakazawa H."/>
            <person name="Takamiya M."/>
            <person name="Kato Y."/>
            <person name="Yoshizawa T."/>
            <person name="Tanaka T."/>
            <person name="Kudoh Y."/>
            <person name="Yamazaki J."/>
            <person name="Kushida N."/>
            <person name="Oguchi A."/>
            <person name="Aoki K."/>
            <person name="Masuda S."/>
            <person name="Yanagii M."/>
            <person name="Nishimura M."/>
            <person name="Yamagishi A."/>
            <person name="Oshima T."/>
            <person name="Kikuchi H."/>
        </authorList>
    </citation>
    <scope>NUCLEOTIDE SEQUENCE [LARGE SCALE GENOMIC DNA]</scope>
    <source>
        <strain>DSM 16993 / JCM 10545 / NBRC 100140 / 7</strain>
    </source>
</reference>
<dbReference type="EMBL" id="BA000023">
    <property type="protein sequence ID" value="BAK54228.1"/>
    <property type="molecule type" value="Genomic_DNA"/>
</dbReference>
<dbReference type="SMR" id="Q975X4"/>
<dbReference type="STRING" id="273063.STK_03040"/>
<dbReference type="KEGG" id="sto:STK_03040"/>
<dbReference type="PATRIC" id="fig|273063.9.peg.358"/>
<dbReference type="eggNOG" id="arCOG00928">
    <property type="taxonomic scope" value="Archaea"/>
</dbReference>
<dbReference type="OrthoDB" id="15207at2157"/>
<dbReference type="Proteomes" id="UP000001015">
    <property type="component" value="Chromosome"/>
</dbReference>
<dbReference type="Gene3D" id="3.30.2170.10">
    <property type="entry name" value="archaeoglobus fulgidus dsm 4304 superfamily"/>
    <property type="match status" value="1"/>
</dbReference>
<dbReference type="HAMAP" id="MF_00582">
    <property type="entry name" value="UPF0215"/>
    <property type="match status" value="1"/>
</dbReference>
<dbReference type="InterPro" id="IPR002802">
    <property type="entry name" value="Endo_dU"/>
</dbReference>
<dbReference type="PANTHER" id="PTHR39518">
    <property type="entry name" value="UPF0215 PROTEIN MJ1150"/>
    <property type="match status" value="1"/>
</dbReference>
<dbReference type="PANTHER" id="PTHR39518:SF2">
    <property type="entry name" value="UPF0215 PROTEIN MJ1150"/>
    <property type="match status" value="1"/>
</dbReference>
<dbReference type="Pfam" id="PF01949">
    <property type="entry name" value="DUF99"/>
    <property type="match status" value="1"/>
</dbReference>
<dbReference type="PIRSF" id="PIRSF006380">
    <property type="entry name" value="UCP006380"/>
    <property type="match status" value="1"/>
</dbReference>
<evidence type="ECO:0000255" key="1">
    <source>
        <dbReference type="HAMAP-Rule" id="MF_00582"/>
    </source>
</evidence>
<protein>
    <recommendedName>
        <fullName evidence="1">UPF0215 protein STK_03040</fullName>
    </recommendedName>
</protein>
<comment type="similarity">
    <text evidence="1">Belongs to the UPF0215 family.</text>
</comment>
<keyword id="KW-1185">Reference proteome</keyword>
<name>Y304_SULTO</name>